<dbReference type="EC" id="5.4.99.5" evidence="1"/>
<dbReference type="EC" id="4.2.1.51" evidence="1"/>
<dbReference type="EMBL" id="AE000657">
    <property type="protein sequence ID" value="AAC07041.1"/>
    <property type="molecule type" value="Genomic_DNA"/>
</dbReference>
<dbReference type="PIR" id="B70382">
    <property type="entry name" value="B70382"/>
</dbReference>
<dbReference type="RefSeq" id="NP_213648.1">
    <property type="nucleotide sequence ID" value="NC_000918.1"/>
</dbReference>
<dbReference type="RefSeq" id="WP_010880586.1">
    <property type="nucleotide sequence ID" value="NC_000918.1"/>
</dbReference>
<dbReference type="SMR" id="O67085"/>
<dbReference type="FunCoup" id="O67085">
    <property type="interactions" value="391"/>
</dbReference>
<dbReference type="STRING" id="224324.aq_951"/>
<dbReference type="EnsemblBacteria" id="AAC07041">
    <property type="protein sequence ID" value="AAC07041"/>
    <property type="gene ID" value="aq_951"/>
</dbReference>
<dbReference type="KEGG" id="aae:aq_951"/>
<dbReference type="PATRIC" id="fig|224324.8.peg.746"/>
<dbReference type="eggNOG" id="COG0077">
    <property type="taxonomic scope" value="Bacteria"/>
</dbReference>
<dbReference type="eggNOG" id="COG1605">
    <property type="taxonomic scope" value="Bacteria"/>
</dbReference>
<dbReference type="HOGENOM" id="CLU_035008_0_1_0"/>
<dbReference type="InParanoid" id="O67085"/>
<dbReference type="OrthoDB" id="9802281at2"/>
<dbReference type="UniPathway" id="UPA00120">
    <property type="reaction ID" value="UER00203"/>
</dbReference>
<dbReference type="UniPathway" id="UPA00121">
    <property type="reaction ID" value="UER00345"/>
</dbReference>
<dbReference type="Proteomes" id="UP000000798">
    <property type="component" value="Chromosome"/>
</dbReference>
<dbReference type="GO" id="GO:0005737">
    <property type="term" value="C:cytoplasm"/>
    <property type="evidence" value="ECO:0000318"/>
    <property type="project" value="GO_Central"/>
</dbReference>
<dbReference type="GO" id="GO:0004106">
    <property type="term" value="F:chorismate mutase activity"/>
    <property type="evidence" value="ECO:0007669"/>
    <property type="project" value="UniProtKB-EC"/>
</dbReference>
<dbReference type="GO" id="GO:0004664">
    <property type="term" value="F:prephenate dehydratase activity"/>
    <property type="evidence" value="ECO:0000318"/>
    <property type="project" value="GO_Central"/>
</dbReference>
<dbReference type="GO" id="GO:0046417">
    <property type="term" value="P:chorismate metabolic process"/>
    <property type="evidence" value="ECO:0007669"/>
    <property type="project" value="InterPro"/>
</dbReference>
<dbReference type="GO" id="GO:0009094">
    <property type="term" value="P:L-phenylalanine biosynthetic process"/>
    <property type="evidence" value="ECO:0000318"/>
    <property type="project" value="GO_Central"/>
</dbReference>
<dbReference type="CDD" id="cd04905">
    <property type="entry name" value="ACT_CM-PDT"/>
    <property type="match status" value="1"/>
</dbReference>
<dbReference type="CDD" id="cd13630">
    <property type="entry name" value="PBP2_PDT_1"/>
    <property type="match status" value="1"/>
</dbReference>
<dbReference type="FunFam" id="3.40.190.10:FF:000029">
    <property type="entry name" value="Chorismate mutase/Prephenate dehydratase"/>
    <property type="match status" value="1"/>
</dbReference>
<dbReference type="FunFam" id="3.40.190.10:FF:000034">
    <property type="entry name" value="Chorismate mutase/prephenate dehydratase"/>
    <property type="match status" value="1"/>
</dbReference>
<dbReference type="FunFam" id="1.20.59.10:FF:000004">
    <property type="entry name" value="Prephenate dehydratase"/>
    <property type="match status" value="1"/>
</dbReference>
<dbReference type="FunFam" id="3.30.70.260:FF:000012">
    <property type="entry name" value="Prephenate dehydratase"/>
    <property type="match status" value="1"/>
</dbReference>
<dbReference type="Gene3D" id="3.30.70.260">
    <property type="match status" value="1"/>
</dbReference>
<dbReference type="Gene3D" id="1.20.59.10">
    <property type="entry name" value="Chorismate mutase"/>
    <property type="match status" value="1"/>
</dbReference>
<dbReference type="Gene3D" id="3.40.190.10">
    <property type="entry name" value="Periplasmic binding protein-like II"/>
    <property type="match status" value="2"/>
</dbReference>
<dbReference type="InterPro" id="IPR045865">
    <property type="entry name" value="ACT-like_dom_sf"/>
</dbReference>
<dbReference type="InterPro" id="IPR002912">
    <property type="entry name" value="ACT_dom"/>
</dbReference>
<dbReference type="InterPro" id="IPR008242">
    <property type="entry name" value="Chor_mutase/pphenate_deHydtase"/>
</dbReference>
<dbReference type="InterPro" id="IPR036263">
    <property type="entry name" value="Chorismate_II_sf"/>
</dbReference>
<dbReference type="InterPro" id="IPR036979">
    <property type="entry name" value="CM_dom_sf"/>
</dbReference>
<dbReference type="InterPro" id="IPR002701">
    <property type="entry name" value="CM_II_prokaryot"/>
</dbReference>
<dbReference type="InterPro" id="IPR001086">
    <property type="entry name" value="Preph_deHydtase"/>
</dbReference>
<dbReference type="InterPro" id="IPR018528">
    <property type="entry name" value="Preph_deHydtase_CS"/>
</dbReference>
<dbReference type="NCBIfam" id="NF008865">
    <property type="entry name" value="PRK11898.1"/>
    <property type="match status" value="1"/>
</dbReference>
<dbReference type="PANTHER" id="PTHR21022">
    <property type="entry name" value="PREPHENATE DEHYDRATASE P PROTEIN"/>
    <property type="match status" value="1"/>
</dbReference>
<dbReference type="PANTHER" id="PTHR21022:SF19">
    <property type="entry name" value="PREPHENATE DEHYDRATASE-RELATED"/>
    <property type="match status" value="1"/>
</dbReference>
<dbReference type="Pfam" id="PF01842">
    <property type="entry name" value="ACT"/>
    <property type="match status" value="1"/>
</dbReference>
<dbReference type="Pfam" id="PF01817">
    <property type="entry name" value="CM_2"/>
    <property type="match status" value="1"/>
</dbReference>
<dbReference type="Pfam" id="PF00800">
    <property type="entry name" value="PDT"/>
    <property type="match status" value="1"/>
</dbReference>
<dbReference type="PIRSF" id="PIRSF001500">
    <property type="entry name" value="Chor_mut_pdt_Ppr"/>
    <property type="match status" value="1"/>
</dbReference>
<dbReference type="SMART" id="SM00830">
    <property type="entry name" value="CM_2"/>
    <property type="match status" value="1"/>
</dbReference>
<dbReference type="SUPFAM" id="SSF55021">
    <property type="entry name" value="ACT-like"/>
    <property type="match status" value="1"/>
</dbReference>
<dbReference type="SUPFAM" id="SSF48600">
    <property type="entry name" value="Chorismate mutase II"/>
    <property type="match status" value="1"/>
</dbReference>
<dbReference type="SUPFAM" id="SSF53850">
    <property type="entry name" value="Periplasmic binding protein-like II"/>
    <property type="match status" value="1"/>
</dbReference>
<dbReference type="PROSITE" id="PS51671">
    <property type="entry name" value="ACT"/>
    <property type="match status" value="1"/>
</dbReference>
<dbReference type="PROSITE" id="PS51168">
    <property type="entry name" value="CHORISMATE_MUT_2"/>
    <property type="match status" value="1"/>
</dbReference>
<dbReference type="PROSITE" id="PS00857">
    <property type="entry name" value="PREPHENATE_DEHYDR_1"/>
    <property type="match status" value="1"/>
</dbReference>
<dbReference type="PROSITE" id="PS00858">
    <property type="entry name" value="PREPHENATE_DEHYDR_2"/>
    <property type="match status" value="1"/>
</dbReference>
<dbReference type="PROSITE" id="PS51171">
    <property type="entry name" value="PREPHENATE_DEHYDR_3"/>
    <property type="match status" value="1"/>
</dbReference>
<name>CMPDT_AQUAE</name>
<protein>
    <recommendedName>
        <fullName evidence="1">Bifunctional chorismate mutase/prephenate dehydratase</fullName>
    </recommendedName>
    <alternativeName>
        <fullName evidence="1">Chorismate mutase-prephenate dehydratase</fullName>
    </alternativeName>
    <alternativeName>
        <fullName evidence="1">P-protein</fullName>
    </alternativeName>
    <domain>
        <recommendedName>
            <fullName evidence="1">Chorismate mutase</fullName>
            <shortName evidence="1">CM</shortName>
            <ecNumber evidence="1">5.4.99.5</ecNumber>
        </recommendedName>
    </domain>
    <domain>
        <recommendedName>
            <fullName evidence="1">Prephenate dehydratase</fullName>
            <shortName evidence="1">PDT</shortName>
            <ecNumber evidence="1">4.2.1.51</ecNumber>
        </recommendedName>
    </domain>
</protein>
<gene>
    <name type="primary">pheA</name>
    <name type="ordered locus">aq_951</name>
</gene>
<sequence>MEELKELRKEIDRIDEEILRLLNERAKLAKRIGEIKSKANLPIHVPEREREIFEKILRLNKEVYGGVFPQEALVHIYREIISACLSLEKKIKVAYLGPKATFTHQAALEFFGFSAHYTPCSTIRDVFVEVETKRADYGVVPVENTIEGVVNYTLDMFLESDVKIAGEIVIPITLHLLSASDSIENVEKVYSHKMALAQCRSWLEKNLPSVQVIEVESTAKACEIALEDERAGAVASEVAAYTYHLNILARNIQDSGDNFTRFLVIAKRDLKPTGSDKTSILFGVKDEPGALYKALEVFYKHGINLTKIESRPSKKKAWDYVFFVDLEGHKEEERVEKALKELKEKTQFLKVLGSYPKALLQE</sequence>
<organism>
    <name type="scientific">Aquifex aeolicus (strain VF5)</name>
    <dbReference type="NCBI Taxonomy" id="224324"/>
    <lineage>
        <taxon>Bacteria</taxon>
        <taxon>Pseudomonadati</taxon>
        <taxon>Aquificota</taxon>
        <taxon>Aquificia</taxon>
        <taxon>Aquificales</taxon>
        <taxon>Aquificaceae</taxon>
        <taxon>Aquifex</taxon>
    </lineage>
</organism>
<proteinExistence type="inferred from homology"/>
<accession>O67085</accession>
<reference key="1">
    <citation type="journal article" date="1998" name="Nature">
        <title>The complete genome of the hyperthermophilic bacterium Aquifex aeolicus.</title>
        <authorList>
            <person name="Deckert G."/>
            <person name="Warren P.V."/>
            <person name="Gaasterland T."/>
            <person name="Young W.G."/>
            <person name="Lenox A.L."/>
            <person name="Graham D.E."/>
            <person name="Overbeek R."/>
            <person name="Snead M.A."/>
            <person name="Keller M."/>
            <person name="Aujay M."/>
            <person name="Huber R."/>
            <person name="Feldman R.A."/>
            <person name="Short J.M."/>
            <person name="Olsen G.J."/>
            <person name="Swanson R.V."/>
        </authorList>
    </citation>
    <scope>NUCLEOTIDE SEQUENCE [LARGE SCALE GENOMIC DNA]</scope>
    <source>
        <strain>VF5</strain>
    </source>
</reference>
<evidence type="ECO:0000250" key="1">
    <source>
        <dbReference type="UniProtKB" id="P0A9J8"/>
    </source>
</evidence>
<evidence type="ECO:0000255" key="2"/>
<evidence type="ECO:0000255" key="3">
    <source>
        <dbReference type="PROSITE-ProRule" id="PRU00515"/>
    </source>
</evidence>
<evidence type="ECO:0000255" key="4">
    <source>
        <dbReference type="PROSITE-ProRule" id="PRU00517"/>
    </source>
</evidence>
<evidence type="ECO:0000255" key="5">
    <source>
        <dbReference type="PROSITE-ProRule" id="PRU01007"/>
    </source>
</evidence>
<comment type="function">
    <text evidence="1">Catalyzes the Claisen rearrangement of chorismate to prephenate and the decarboxylation/dehydration of prephenate to phenylpyruvate.</text>
</comment>
<comment type="catalytic activity">
    <reaction evidence="1">
        <text>chorismate = prephenate</text>
        <dbReference type="Rhea" id="RHEA:13897"/>
        <dbReference type="ChEBI" id="CHEBI:29748"/>
        <dbReference type="ChEBI" id="CHEBI:29934"/>
        <dbReference type="EC" id="5.4.99.5"/>
    </reaction>
</comment>
<comment type="catalytic activity">
    <reaction evidence="1">
        <text>prephenate + H(+) = 3-phenylpyruvate + CO2 + H2O</text>
        <dbReference type="Rhea" id="RHEA:21648"/>
        <dbReference type="ChEBI" id="CHEBI:15377"/>
        <dbReference type="ChEBI" id="CHEBI:15378"/>
        <dbReference type="ChEBI" id="CHEBI:16526"/>
        <dbReference type="ChEBI" id="CHEBI:18005"/>
        <dbReference type="ChEBI" id="CHEBI:29934"/>
        <dbReference type="EC" id="4.2.1.51"/>
    </reaction>
</comment>
<comment type="pathway">
    <text evidence="1">Amino-acid biosynthesis; L-phenylalanine biosynthesis; phenylpyruvate from prephenate: step 1/1.</text>
</comment>
<comment type="pathway">
    <text evidence="1">Metabolic intermediate biosynthesis; prephenate biosynthesis; prephenate from chorismate: step 1/1.</text>
</comment>
<comment type="subcellular location">
    <subcellularLocation>
        <location evidence="1">Cytoplasm</location>
    </subcellularLocation>
</comment>
<feature type="chain" id="PRO_0000119181" description="Bifunctional chorismate mutase/prephenate dehydratase">
    <location>
        <begin position="1"/>
        <end position="362"/>
    </location>
</feature>
<feature type="domain" description="Chorismate mutase" evidence="3">
    <location>
        <begin position="1"/>
        <end position="92"/>
    </location>
</feature>
<feature type="domain" description="Prephenate dehydratase" evidence="4">
    <location>
        <begin position="93"/>
        <end position="267"/>
    </location>
</feature>
<feature type="domain" description="ACT" evidence="5">
    <location>
        <begin position="279"/>
        <end position="356"/>
    </location>
</feature>
<feature type="binding site" evidence="1">
    <location>
        <position position="8"/>
    </location>
    <ligand>
        <name>substrate</name>
    </ligand>
</feature>
<feature type="binding site" evidence="1">
    <location>
        <position position="25"/>
    </location>
    <ligand>
        <name>substrate</name>
    </ligand>
</feature>
<feature type="binding site" evidence="1">
    <location>
        <position position="36"/>
    </location>
    <ligand>
        <name>substrate</name>
    </ligand>
</feature>
<feature type="binding site" evidence="1">
    <location>
        <position position="49"/>
    </location>
    <ligand>
        <name>substrate</name>
    </ligand>
</feature>
<feature type="site" description="Essential for prephenate dehydratase activity" evidence="2">
    <location>
        <position position="260"/>
    </location>
</feature>
<keyword id="KW-0028">Amino-acid biosynthesis</keyword>
<keyword id="KW-0057">Aromatic amino acid biosynthesis</keyword>
<keyword id="KW-0963">Cytoplasm</keyword>
<keyword id="KW-0413">Isomerase</keyword>
<keyword id="KW-0456">Lyase</keyword>
<keyword id="KW-0511">Multifunctional enzyme</keyword>
<keyword id="KW-0584">Phenylalanine biosynthesis</keyword>
<keyword id="KW-1185">Reference proteome</keyword>